<organism>
    <name type="scientific">Salmonella montevideo</name>
    <dbReference type="NCBI Taxonomy" id="115981"/>
    <lineage>
        <taxon>Bacteria</taxon>
        <taxon>Pseudomonadati</taxon>
        <taxon>Pseudomonadota</taxon>
        <taxon>Gammaproteobacteria</taxon>
        <taxon>Enterobacterales</taxon>
        <taxon>Enterobacteriaceae</taxon>
        <taxon>Salmonella</taxon>
    </lineage>
</organism>
<dbReference type="EC" id="5.4.2.8"/>
<dbReference type="EMBL" id="M84642">
    <property type="protein sequence ID" value="AAB49391.1"/>
    <property type="molecule type" value="Genomic_DNA"/>
</dbReference>
<dbReference type="RefSeq" id="WP_044782506.1">
    <property type="nucleotide sequence ID" value="NZ_JAXOVB010000006.1"/>
</dbReference>
<dbReference type="SMR" id="Q01411"/>
<dbReference type="UniPathway" id="UPA00126">
    <property type="reaction ID" value="UER00424"/>
</dbReference>
<dbReference type="UniPathway" id="UPA00281"/>
<dbReference type="GO" id="GO:0000287">
    <property type="term" value="F:magnesium ion binding"/>
    <property type="evidence" value="ECO:0007669"/>
    <property type="project" value="InterPro"/>
</dbReference>
<dbReference type="GO" id="GO:0004615">
    <property type="term" value="F:phosphomannomutase activity"/>
    <property type="evidence" value="ECO:0007669"/>
    <property type="project" value="UniProtKB-EC"/>
</dbReference>
<dbReference type="GO" id="GO:0009298">
    <property type="term" value="P:GDP-mannose biosynthetic process"/>
    <property type="evidence" value="ECO:0007669"/>
    <property type="project" value="UniProtKB-UniPathway"/>
</dbReference>
<dbReference type="GO" id="GO:0009243">
    <property type="term" value="P:O antigen biosynthetic process"/>
    <property type="evidence" value="ECO:0007669"/>
    <property type="project" value="UniProtKB-UniPathway"/>
</dbReference>
<dbReference type="CDD" id="cd03089">
    <property type="entry name" value="PMM_PGM"/>
    <property type="match status" value="1"/>
</dbReference>
<dbReference type="Gene3D" id="3.40.120.10">
    <property type="entry name" value="Alpha-D-Glucose-1,6-Bisphosphate, subunit A, domain 3"/>
    <property type="match status" value="3"/>
</dbReference>
<dbReference type="Gene3D" id="3.30.310.50">
    <property type="entry name" value="Alpha-D-phosphohexomutase, C-terminal domain"/>
    <property type="match status" value="1"/>
</dbReference>
<dbReference type="InterPro" id="IPR005844">
    <property type="entry name" value="A-D-PHexomutase_a/b/a-I"/>
</dbReference>
<dbReference type="InterPro" id="IPR016055">
    <property type="entry name" value="A-D-PHexomutase_a/b/a-I/II/III"/>
</dbReference>
<dbReference type="InterPro" id="IPR005845">
    <property type="entry name" value="A-D-PHexomutase_a/b/a-II"/>
</dbReference>
<dbReference type="InterPro" id="IPR005846">
    <property type="entry name" value="A-D-PHexomutase_a/b/a-III"/>
</dbReference>
<dbReference type="InterPro" id="IPR005843">
    <property type="entry name" value="A-D-PHexomutase_C"/>
</dbReference>
<dbReference type="InterPro" id="IPR036900">
    <property type="entry name" value="A-D-PHexomutase_C_sf"/>
</dbReference>
<dbReference type="InterPro" id="IPR016066">
    <property type="entry name" value="A-D-PHexomutase_CS"/>
</dbReference>
<dbReference type="InterPro" id="IPR005841">
    <property type="entry name" value="Alpha-D-phosphohexomutase_SF"/>
</dbReference>
<dbReference type="NCBIfam" id="NF011943">
    <property type="entry name" value="PRK15414.1"/>
    <property type="match status" value="1"/>
</dbReference>
<dbReference type="PANTHER" id="PTHR43771">
    <property type="entry name" value="PHOSPHOMANNOMUTASE"/>
    <property type="match status" value="1"/>
</dbReference>
<dbReference type="PANTHER" id="PTHR43771:SF1">
    <property type="entry name" value="PHOSPHOMANNOMUTASE"/>
    <property type="match status" value="1"/>
</dbReference>
<dbReference type="Pfam" id="PF02878">
    <property type="entry name" value="PGM_PMM_I"/>
    <property type="match status" value="1"/>
</dbReference>
<dbReference type="Pfam" id="PF02879">
    <property type="entry name" value="PGM_PMM_II"/>
    <property type="match status" value="1"/>
</dbReference>
<dbReference type="Pfam" id="PF02880">
    <property type="entry name" value="PGM_PMM_III"/>
    <property type="match status" value="1"/>
</dbReference>
<dbReference type="Pfam" id="PF00408">
    <property type="entry name" value="PGM_PMM_IV"/>
    <property type="match status" value="1"/>
</dbReference>
<dbReference type="PRINTS" id="PR00509">
    <property type="entry name" value="PGMPMM"/>
</dbReference>
<dbReference type="SUPFAM" id="SSF55957">
    <property type="entry name" value="Phosphoglucomutase, C-terminal domain"/>
    <property type="match status" value="1"/>
</dbReference>
<dbReference type="SUPFAM" id="SSF53738">
    <property type="entry name" value="Phosphoglucomutase, first 3 domains"/>
    <property type="match status" value="3"/>
</dbReference>
<dbReference type="PROSITE" id="PS00710">
    <property type="entry name" value="PGM_PMM"/>
    <property type="match status" value="1"/>
</dbReference>
<sequence length="456" mass="49900">MNNLTCFKAYDIRGRLGEELNEDIAWRIGRAYGEYLKPKTIVLGGDVRLTSEALKLALAKGLQDAGVDVLDIGMSGTEEIYFATFHLGVDGGIEVTASHNPMDYNGMKLVREGARPISGDTGLRDVQRLAEAGDFPPVNDAARGSYRQISLRDAYIDHLLAYISVNNLTPLKLVVNSGNGAAGPVIDAIEARLKALGAPVEFIKIHNTPDGTFPNGIPNPLLPECRDDTRKAVIEHGADMGIAFDGDFDRCFLFDEKGQFIEGYYIVGLLAEAFLEKHPGAKIIHDPRLTWNTEAVVTAAGGTPVMSKTGHAFIKERMRTEDAIYGGEMSAHHYFRDFAYCDSGMIPWLLVAELVCLKGQSLGELVRDRMAAFPASGEINSRLAEPAAAIARVEAHFAEEAQAVDRTDGLSMSFADWRFNLRSSNTEPVVRLNVESRGDIPLMEARTKEILQLLNS</sequence>
<evidence type="ECO:0000250" key="1"/>
<evidence type="ECO:0000305" key="2"/>
<comment type="function">
    <text>Involved in GDP-mannose biosynthesis which serves as the activated sugar nucleotide precursor for mannose residues in cell surface polysaccharides. This enzyme participates in synthesis of the LPS O antigen.</text>
</comment>
<comment type="catalytic activity">
    <reaction>
        <text>alpha-D-mannose 1-phosphate = D-mannose 6-phosphate</text>
        <dbReference type="Rhea" id="RHEA:11140"/>
        <dbReference type="ChEBI" id="CHEBI:58409"/>
        <dbReference type="ChEBI" id="CHEBI:58735"/>
        <dbReference type="EC" id="5.4.2.8"/>
    </reaction>
</comment>
<comment type="cofactor">
    <cofactor evidence="1">
        <name>Mg(2+)</name>
        <dbReference type="ChEBI" id="CHEBI:18420"/>
    </cofactor>
    <text evidence="1">Binds 1 Mg(2+) ion per subunit.</text>
</comment>
<comment type="pathway">
    <text>Nucleotide-sugar biosynthesis; GDP-alpha-D-mannose biosynthesis; alpha-D-mannose 1-phosphate from D-fructose 6-phosphate: step 2/2.</text>
</comment>
<comment type="pathway">
    <text>Bacterial outer membrane biogenesis; LPS O-antigen biosynthesis.</text>
</comment>
<comment type="similarity">
    <text evidence="2">Belongs to the phosphohexose mutase family.</text>
</comment>
<protein>
    <recommendedName>
        <fullName>Phosphomannomutase</fullName>
        <shortName>PMM</shortName>
        <ecNumber>5.4.2.8</ecNumber>
    </recommendedName>
</protein>
<reference key="1">
    <citation type="journal article" date="1992" name="J. Gen. Microbiol.">
        <title>Sequence and structural analysis of the rfb (O antigen) gene cluster from a group C1 Salmonella enterica strain.</title>
        <authorList>
            <person name="Lee S.J."/>
            <person name="Romana L.K."/>
            <person name="Reeves P.R."/>
        </authorList>
    </citation>
    <scope>NUCLEOTIDE SEQUENCE [GENOMIC DNA]</scope>
    <source>
        <strain>M40</strain>
    </source>
</reference>
<feature type="chain" id="PRO_0000147821" description="Phosphomannomutase">
    <location>
        <begin position="1"/>
        <end position="456"/>
    </location>
</feature>
<feature type="active site" description="Phosphoserine intermediate" evidence="1">
    <location>
        <position position="98"/>
    </location>
</feature>
<feature type="binding site" description="via phosphate group" evidence="1">
    <location>
        <position position="98"/>
    </location>
    <ligand>
        <name>Mg(2+)</name>
        <dbReference type="ChEBI" id="CHEBI:18420"/>
    </ligand>
</feature>
<feature type="binding site" evidence="1">
    <location>
        <position position="245"/>
    </location>
    <ligand>
        <name>Mg(2+)</name>
        <dbReference type="ChEBI" id="CHEBI:18420"/>
    </ligand>
</feature>
<feature type="binding site" evidence="1">
    <location>
        <position position="247"/>
    </location>
    <ligand>
        <name>Mg(2+)</name>
        <dbReference type="ChEBI" id="CHEBI:18420"/>
    </ligand>
</feature>
<feature type="binding site" evidence="1">
    <location>
        <position position="249"/>
    </location>
    <ligand>
        <name>Mg(2+)</name>
        <dbReference type="ChEBI" id="CHEBI:18420"/>
    </ligand>
</feature>
<gene>
    <name type="primary">manB</name>
    <name type="synonym">rfbL</name>
</gene>
<keyword id="KW-0413">Isomerase</keyword>
<keyword id="KW-0448">Lipopolysaccharide biosynthesis</keyword>
<keyword id="KW-0460">Magnesium</keyword>
<keyword id="KW-0479">Metal-binding</keyword>
<keyword id="KW-0597">Phosphoprotein</keyword>
<accession>Q01411</accession>
<name>MANB_SALMO</name>
<proteinExistence type="inferred from homology"/>